<name>CAS6B_SACS2</name>
<proteinExistence type="evidence at protein level"/>
<gene>
    <name type="primary">cas6b</name>
    <name type="ordered locus">SSO2004</name>
</gene>
<protein>
    <recommendedName>
        <fullName>CRISPR-associated endoribonuclease Cas6 2</fullName>
        <ecNumber>3.1.-.-</ecNumber>
    </recommendedName>
</protein>
<sequence>MPLIFKIGYNVIPLQDVILPTPSSKVLKYLIQSGKLIPSLKDLITSRDKYKPIFISHLGFNQRRIFQTNGNLKTITKGSRLSSIIAFSTQANVLSEVADEGIFETVYGKFHIMIESIEIVEVEKLKEEVEKHMNDNIRVRFVSPTLLSSKVLLPPSLSERYKKIHAGYSTLPSVGLIVAYAYNVYCNLIGKKEVEVRAFKFGILSNALSRIIGYDLHPVTVAIGEDSKGNLRKARGVMGWIEFDIPDERLKRRALNYLLTSSYLGIGRSRGIGFGEIRLEFRKIEEKEG</sequence>
<accession>Q97WV8</accession>
<organism>
    <name type="scientific">Saccharolobus solfataricus (strain ATCC 35092 / DSM 1617 / JCM 11322 / P2)</name>
    <name type="common">Sulfolobus solfataricus</name>
    <dbReference type="NCBI Taxonomy" id="273057"/>
    <lineage>
        <taxon>Archaea</taxon>
        <taxon>Thermoproteota</taxon>
        <taxon>Thermoprotei</taxon>
        <taxon>Sulfolobales</taxon>
        <taxon>Sulfolobaceae</taxon>
        <taxon>Saccharolobus</taxon>
    </lineage>
</organism>
<comment type="function">
    <text evidence="1">CRISPR (clustered regularly interspaced short palindromic repeat) is an adaptive immune system that provides protection against mobile genetic elements (viruses, transposable elements and conjugative plasmids). CRISPR clusters contain sequences complementary to antecedent mobile elements and target invading nucleic acids. CRISPR clusters are transcribed and processed into CRISPR RNA (crRNA). Functions as a ssRNA-specific endoribonuclease, generating an 8 base-long tag known as the 5' handle.</text>
</comment>
<comment type="cofactor">
    <cofactor evidence="2">
        <name>Mg(2+)</name>
        <dbReference type="ChEBI" id="CHEBI:18420"/>
    </cofactor>
</comment>
<comment type="subunit">
    <text>Possibly part of the aCascade ribonucleoprotein complex.</text>
</comment>
<comment type="similarity">
    <text evidence="2">Belongs to the CRISPR-associated endoribonuclease Cas6 family.</text>
</comment>
<reference key="1">
    <citation type="journal article" date="2001" name="Proc. Natl. Acad. Sci. U.S.A.">
        <title>The complete genome of the crenarchaeon Sulfolobus solfataricus P2.</title>
        <authorList>
            <person name="She Q."/>
            <person name="Singh R.K."/>
            <person name="Confalonieri F."/>
            <person name="Zivanovic Y."/>
            <person name="Allard G."/>
            <person name="Awayez M.J."/>
            <person name="Chan-Weiher C.C.-Y."/>
            <person name="Clausen I.G."/>
            <person name="Curtis B.A."/>
            <person name="De Moors A."/>
            <person name="Erauso G."/>
            <person name="Fletcher C."/>
            <person name="Gordon P.M.K."/>
            <person name="Heikamp-de Jong I."/>
            <person name="Jeffries A.C."/>
            <person name="Kozera C.J."/>
            <person name="Medina N."/>
            <person name="Peng X."/>
            <person name="Thi-Ngoc H.P."/>
            <person name="Redder P."/>
            <person name="Schenk M.E."/>
            <person name="Theriault C."/>
            <person name="Tolstrup N."/>
            <person name="Charlebois R.L."/>
            <person name="Doolittle W.F."/>
            <person name="Duguet M."/>
            <person name="Gaasterland T."/>
            <person name="Garrett R.A."/>
            <person name="Ragan M.A."/>
            <person name="Sensen C.W."/>
            <person name="Van der Oost J."/>
        </authorList>
    </citation>
    <scope>NUCLEOTIDE SEQUENCE [LARGE SCALE GENOMIC DNA]</scope>
    <source>
        <strain>ATCC 35092 / DSM 1617 / JCM 11322 / P2</strain>
    </source>
</reference>
<reference key="2">
    <citation type="journal article" date="2011" name="J. Biol. Chem.">
        <title>Structural and functional characterization of an archaeal clustered regularly interspaced short palindromic repeat (CRISPR)-associated complex for antiviral defense (CASCADE).</title>
        <authorList>
            <person name="Lintner N.G."/>
            <person name="Kerou M."/>
            <person name="Brumfield S.K."/>
            <person name="Graham S."/>
            <person name="Liu H."/>
            <person name="Naismith J.H."/>
            <person name="Sdano M."/>
            <person name="Peng N."/>
            <person name="She Q."/>
            <person name="Copie V."/>
            <person name="Young M.J."/>
            <person name="White M.F."/>
            <person name="Lawrence C.M."/>
        </authorList>
    </citation>
    <scope>FUNCTION AS AN ENDORIBONUCLEASE</scope>
    <source>
        <strain>ATCC 35092 / DSM 1617 / JCM 11322 / P2</strain>
    </source>
</reference>
<evidence type="ECO:0000269" key="1">
    <source>
    </source>
</evidence>
<evidence type="ECO:0000305" key="2"/>
<evidence type="ECO:0007829" key="3">
    <source>
        <dbReference type="PDB" id="4ILL"/>
    </source>
</evidence>
<evidence type="ECO:0007829" key="4">
    <source>
        <dbReference type="PDB" id="4ILM"/>
    </source>
</evidence>
<evidence type="ECO:0007829" key="5">
    <source>
        <dbReference type="PDB" id="4ILR"/>
    </source>
</evidence>
<keyword id="KW-0002">3D-structure</keyword>
<keyword id="KW-0051">Antiviral defense</keyword>
<keyword id="KW-0255">Endonuclease</keyword>
<keyword id="KW-0378">Hydrolase</keyword>
<keyword id="KW-0460">Magnesium</keyword>
<keyword id="KW-0540">Nuclease</keyword>
<keyword id="KW-1185">Reference proteome</keyword>
<keyword id="KW-0694">RNA-binding</keyword>
<dbReference type="EC" id="3.1.-.-"/>
<dbReference type="EMBL" id="AE006641">
    <property type="protein sequence ID" value="AAK42192.1"/>
    <property type="molecule type" value="Genomic_DNA"/>
</dbReference>
<dbReference type="PIR" id="A99367">
    <property type="entry name" value="A99367"/>
</dbReference>
<dbReference type="PDB" id="4ILL">
    <property type="method" value="X-ray"/>
    <property type="resolution" value="2.48 A"/>
    <property type="chains" value="A/B=1-289"/>
</dbReference>
<dbReference type="PDB" id="4ILM">
    <property type="method" value="X-ray"/>
    <property type="resolution" value="3.07 A"/>
    <property type="chains" value="A/B/D/F/H/J/L/N=1-289"/>
</dbReference>
<dbReference type="PDB" id="4ILR">
    <property type="method" value="X-ray"/>
    <property type="resolution" value="3.09 A"/>
    <property type="chains" value="A=1-289"/>
</dbReference>
<dbReference type="PDBsum" id="4ILL"/>
<dbReference type="PDBsum" id="4ILM"/>
<dbReference type="PDBsum" id="4ILR"/>
<dbReference type="SMR" id="Q97WV8"/>
<dbReference type="DIP" id="DIP-60141N"/>
<dbReference type="STRING" id="273057.SSO2004"/>
<dbReference type="PaxDb" id="273057-SSO2004"/>
<dbReference type="EnsemblBacteria" id="AAK42192">
    <property type="protein sequence ID" value="AAK42192"/>
    <property type="gene ID" value="SSO2004"/>
</dbReference>
<dbReference type="KEGG" id="sso:SSO2004"/>
<dbReference type="PATRIC" id="fig|273057.12.peg.2079"/>
<dbReference type="eggNOG" id="arCOG01439">
    <property type="taxonomic scope" value="Archaea"/>
</dbReference>
<dbReference type="HOGENOM" id="CLU_929391_0_0_2"/>
<dbReference type="InParanoid" id="Q97WV8"/>
<dbReference type="EvolutionaryTrace" id="Q97WV8"/>
<dbReference type="Proteomes" id="UP000001974">
    <property type="component" value="Chromosome"/>
</dbReference>
<dbReference type="GO" id="GO:0004519">
    <property type="term" value="F:endonuclease activity"/>
    <property type="evidence" value="ECO:0007669"/>
    <property type="project" value="UniProtKB-KW"/>
</dbReference>
<dbReference type="GO" id="GO:0003723">
    <property type="term" value="F:RNA binding"/>
    <property type="evidence" value="ECO:0007669"/>
    <property type="project" value="UniProtKB-KW"/>
</dbReference>
<dbReference type="GO" id="GO:0051607">
    <property type="term" value="P:defense response to virus"/>
    <property type="evidence" value="ECO:0007669"/>
    <property type="project" value="UniProtKB-KW"/>
</dbReference>
<dbReference type="CDD" id="cd09652">
    <property type="entry name" value="Cas6"/>
    <property type="match status" value="1"/>
</dbReference>
<dbReference type="Gene3D" id="2.40.30.310">
    <property type="match status" value="1"/>
</dbReference>
<dbReference type="Gene3D" id="3.30.70.1900">
    <property type="match status" value="1"/>
</dbReference>
<dbReference type="InterPro" id="IPR041165">
    <property type="entry name" value="Cas6_N_arch"/>
</dbReference>
<dbReference type="InterPro" id="IPR019267">
    <property type="entry name" value="CRISPR-assoc_Cas6_C"/>
</dbReference>
<dbReference type="InterPro" id="IPR010156">
    <property type="entry name" value="CRISPR-assoc_prot_Cas6"/>
</dbReference>
<dbReference type="NCBIfam" id="TIGR01877">
    <property type="entry name" value="cas_cas6"/>
    <property type="match status" value="1"/>
</dbReference>
<dbReference type="Pfam" id="PF17952">
    <property type="entry name" value="Cas6_N"/>
    <property type="match status" value="1"/>
</dbReference>
<dbReference type="Pfam" id="PF10040">
    <property type="entry name" value="CRISPR_Cas6"/>
    <property type="match status" value="1"/>
</dbReference>
<feature type="chain" id="PRO_0000417884" description="CRISPR-associated endoribonuclease Cas6 2">
    <location>
        <begin position="1"/>
        <end position="289"/>
    </location>
</feature>
<feature type="strand" evidence="3">
    <location>
        <begin position="3"/>
        <end position="15"/>
    </location>
</feature>
<feature type="helix" evidence="3">
    <location>
        <begin position="25"/>
        <end position="32"/>
    </location>
</feature>
<feature type="helix" evidence="3">
    <location>
        <begin position="38"/>
        <end position="40"/>
    </location>
</feature>
<feature type="helix" evidence="3">
    <location>
        <begin position="41"/>
        <end position="45"/>
    </location>
</feature>
<feature type="strand" evidence="3">
    <location>
        <begin position="52"/>
        <end position="55"/>
    </location>
</feature>
<feature type="strand" evidence="3">
    <location>
        <begin position="81"/>
        <end position="87"/>
    </location>
</feature>
<feature type="strand" evidence="4">
    <location>
        <begin position="90"/>
        <end position="92"/>
    </location>
</feature>
<feature type="turn" evidence="3">
    <location>
        <begin position="94"/>
        <end position="98"/>
    </location>
</feature>
<feature type="strand" evidence="3">
    <location>
        <begin position="101"/>
        <end position="105"/>
    </location>
</feature>
<feature type="strand" evidence="3">
    <location>
        <begin position="108"/>
        <end position="121"/>
    </location>
</feature>
<feature type="helix" evidence="3">
    <location>
        <begin position="122"/>
        <end position="129"/>
    </location>
</feature>
<feature type="helix" evidence="3">
    <location>
        <begin position="130"/>
        <end position="132"/>
    </location>
</feature>
<feature type="strand" evidence="3">
    <location>
        <begin position="135"/>
        <end position="145"/>
    </location>
</feature>
<feature type="helix" evidence="3">
    <location>
        <begin position="149"/>
        <end position="152"/>
    </location>
</feature>
<feature type="helix" evidence="3">
    <location>
        <begin position="155"/>
        <end position="157"/>
    </location>
</feature>
<feature type="turn" evidence="3">
    <location>
        <begin position="158"/>
        <end position="163"/>
    </location>
</feature>
<feature type="helix" evidence="3">
    <location>
        <begin position="174"/>
        <end position="188"/>
    </location>
</feature>
<feature type="helix" evidence="3">
    <location>
        <begin position="195"/>
        <end position="208"/>
    </location>
</feature>
<feature type="strand" evidence="3">
    <location>
        <begin position="210"/>
        <end position="223"/>
    </location>
</feature>
<feature type="strand" evidence="5">
    <location>
        <begin position="227"/>
        <end position="229"/>
    </location>
</feature>
<feature type="strand" evidence="3">
    <location>
        <begin position="232"/>
        <end position="244"/>
    </location>
</feature>
<feature type="helix" evidence="3">
    <location>
        <begin position="248"/>
        <end position="264"/>
    </location>
</feature>
<feature type="strand" evidence="4">
    <location>
        <begin position="266"/>
        <end position="268"/>
    </location>
</feature>
<feature type="helix" evidence="3">
    <location>
        <begin position="270"/>
        <end position="272"/>
    </location>
</feature>
<feature type="turn" evidence="4">
    <location>
        <begin position="273"/>
        <end position="275"/>
    </location>
</feature>
<feature type="strand" evidence="3">
    <location>
        <begin position="277"/>
        <end position="283"/>
    </location>
</feature>